<organism>
    <name type="scientific">Amblyomma hebraeum</name>
    <name type="common">South African bont tick</name>
    <dbReference type="NCBI Taxonomy" id="34608"/>
    <lineage>
        <taxon>Eukaryota</taxon>
        <taxon>Metazoa</taxon>
        <taxon>Ecdysozoa</taxon>
        <taxon>Arthropoda</taxon>
        <taxon>Chelicerata</taxon>
        <taxon>Arachnida</taxon>
        <taxon>Acari</taxon>
        <taxon>Parasitiformes</taxon>
        <taxon>Ixodida</taxon>
        <taxon>Ixodoidea</taxon>
        <taxon>Ixodidae</taxon>
        <taxon>Amblyomminae</taxon>
        <taxon>Amblyomma</taxon>
    </lineage>
</organism>
<keyword id="KW-1203">Blood coagulation cascade inhibiting toxin</keyword>
<keyword id="KW-0903">Direct protein sequencing</keyword>
<keyword id="KW-1015">Disulfide bond</keyword>
<keyword id="KW-1199">Hemostasis impairing toxin</keyword>
<keyword id="KW-0646">Protease inhibitor</keyword>
<keyword id="KW-0677">Repeat</keyword>
<keyword id="KW-0964">Secreted</keyword>
<keyword id="KW-0722">Serine protease inhibitor</keyword>
<keyword id="KW-0732">Signal</keyword>
<keyword id="KW-0800">Toxin</keyword>
<comment type="function">
    <text evidence="3">Thrombin-specific inhibitor from tick hemolymph (Ki=20 nM).</text>
</comment>
<comment type="subcellular location">
    <subcellularLocation>
        <location evidence="5">Secreted</location>
    </subcellularLocation>
</comment>
<name>KUNI_AMBHE</name>
<sequence>MGFLVASAVLVCVTSQRVPGYCKKKPAVGPCKALIEKWYFDYSTQSCKTFYYGGCGGNGNKFSSRKKCREACLPKRPSVPVCKQMPDPGFCRAYMPHWFFNSKSGYCEGFVYGGCQGNDNRFKSCWQCMKKCRTAREANRLCWKLTKEFNKKFLRNVPTAKPLPPK</sequence>
<dbReference type="EMBL" id="AY437082">
    <property type="protein sequence ID" value="AAR97367.1"/>
    <property type="molecule type" value="mRNA"/>
</dbReference>
<dbReference type="SMR" id="Q5VJG2"/>
<dbReference type="MEROPS" id="I02.039"/>
<dbReference type="GO" id="GO:0005615">
    <property type="term" value="C:extracellular space"/>
    <property type="evidence" value="ECO:0007669"/>
    <property type="project" value="TreeGrafter"/>
</dbReference>
<dbReference type="GO" id="GO:0004867">
    <property type="term" value="F:serine-type endopeptidase inhibitor activity"/>
    <property type="evidence" value="ECO:0007669"/>
    <property type="project" value="UniProtKB-KW"/>
</dbReference>
<dbReference type="GO" id="GO:0090729">
    <property type="term" value="F:toxin activity"/>
    <property type="evidence" value="ECO:0007669"/>
    <property type="project" value="UniProtKB-KW"/>
</dbReference>
<dbReference type="GO" id="GO:0044562">
    <property type="term" value="P:envenomation resulting in negative regulation of voltage-gated potassium channel activity in another organism"/>
    <property type="evidence" value="ECO:0007669"/>
    <property type="project" value="UniProtKB-ARBA"/>
</dbReference>
<dbReference type="CDD" id="cd00109">
    <property type="entry name" value="Kunitz-type"/>
    <property type="match status" value="1"/>
</dbReference>
<dbReference type="FunFam" id="4.10.410.10:FF:000020">
    <property type="entry name" value="Collagen, type VI, alpha 3"/>
    <property type="match status" value="1"/>
</dbReference>
<dbReference type="FunFam" id="4.10.410.10:FF:000011">
    <property type="entry name" value="Tissue factor pathway inhibitor"/>
    <property type="match status" value="1"/>
</dbReference>
<dbReference type="Gene3D" id="4.10.410.10">
    <property type="entry name" value="Pancreatic trypsin inhibitor Kunitz domain"/>
    <property type="match status" value="2"/>
</dbReference>
<dbReference type="InterPro" id="IPR002223">
    <property type="entry name" value="Kunitz_BPTI"/>
</dbReference>
<dbReference type="InterPro" id="IPR036880">
    <property type="entry name" value="Kunitz_BPTI_sf"/>
</dbReference>
<dbReference type="InterPro" id="IPR020901">
    <property type="entry name" value="Prtase_inh_Kunz-CS"/>
</dbReference>
<dbReference type="InterPro" id="IPR050098">
    <property type="entry name" value="TFPI/VKTCI-like"/>
</dbReference>
<dbReference type="PANTHER" id="PTHR10083:SF374">
    <property type="entry name" value="BPTI_KUNITZ INHIBITOR DOMAIN-CONTAINING PROTEIN"/>
    <property type="match status" value="1"/>
</dbReference>
<dbReference type="PANTHER" id="PTHR10083">
    <property type="entry name" value="KUNITZ-TYPE PROTEASE INHIBITOR-RELATED"/>
    <property type="match status" value="1"/>
</dbReference>
<dbReference type="Pfam" id="PF00014">
    <property type="entry name" value="Kunitz_BPTI"/>
    <property type="match status" value="2"/>
</dbReference>
<dbReference type="PRINTS" id="PR00759">
    <property type="entry name" value="BASICPTASE"/>
</dbReference>
<dbReference type="SMART" id="SM00131">
    <property type="entry name" value="KU"/>
    <property type="match status" value="2"/>
</dbReference>
<dbReference type="SUPFAM" id="SSF57362">
    <property type="entry name" value="BPTI-like"/>
    <property type="match status" value="2"/>
</dbReference>
<dbReference type="PROSITE" id="PS00280">
    <property type="entry name" value="BPTI_KUNITZ_1"/>
    <property type="match status" value="2"/>
</dbReference>
<dbReference type="PROSITE" id="PS50279">
    <property type="entry name" value="BPTI_KUNITZ_2"/>
    <property type="match status" value="2"/>
</dbReference>
<protein>
    <recommendedName>
        <fullName evidence="4">Amblin</fullName>
    </recommendedName>
    <alternativeName>
        <fullName evidence="4">Thrombin inhibitor</fullName>
    </alternativeName>
</protein>
<evidence type="ECO:0000255" key="1"/>
<evidence type="ECO:0000255" key="2">
    <source>
        <dbReference type="PROSITE-ProRule" id="PRU00031"/>
    </source>
</evidence>
<evidence type="ECO:0000269" key="3">
    <source>
    </source>
</evidence>
<evidence type="ECO:0000303" key="4">
    <source>
    </source>
</evidence>
<evidence type="ECO:0000305" key="5"/>
<evidence type="ECO:0000305" key="6">
    <source>
    </source>
</evidence>
<evidence type="ECO:0000312" key="7">
    <source>
        <dbReference type="EMBL" id="AAR97367.1"/>
    </source>
</evidence>
<feature type="signal peptide" evidence="1">
    <location>
        <begin position="1"/>
        <end position="15"/>
    </location>
</feature>
<feature type="chain" id="PRO_5013062386" description="Amblin" evidence="6">
    <location>
        <begin position="16"/>
        <end position="166"/>
    </location>
</feature>
<feature type="domain" description="BPTI/Kunitz inhibitor 1" evidence="2">
    <location>
        <begin position="22"/>
        <end position="72"/>
    </location>
</feature>
<feature type="domain" description="BPTI/Kunitz inhibitor 2" evidence="2">
    <location>
        <begin position="82"/>
        <end position="132"/>
    </location>
</feature>
<feature type="disulfide bond" evidence="2">
    <location>
        <begin position="22"/>
        <end position="72"/>
    </location>
</feature>
<feature type="disulfide bond" evidence="2">
    <location>
        <begin position="31"/>
        <end position="55"/>
    </location>
</feature>
<feature type="disulfide bond" evidence="2">
    <location>
        <begin position="47"/>
        <end position="68"/>
    </location>
</feature>
<feature type="disulfide bond" evidence="2">
    <location>
        <begin position="82"/>
        <end position="132"/>
    </location>
</feature>
<feature type="disulfide bond" evidence="2">
    <location>
        <begin position="91"/>
        <end position="115"/>
    </location>
</feature>
<feature type="disulfide bond" evidence="2">
    <location>
        <begin position="107"/>
        <end position="128"/>
    </location>
</feature>
<proteinExistence type="evidence at protein level"/>
<reference evidence="7" key="1">
    <citation type="journal article" date="2004" name="Gene">
        <title>A thrombin inhibitor from the ixodid tick, Amblyomma hebraeum.</title>
        <authorList>
            <person name="Lai R."/>
            <person name="Takeuchi H."/>
            <person name="Jonczy J."/>
            <person name="Rees H.H."/>
            <person name="Turner P.C."/>
        </authorList>
    </citation>
    <scope>NUCLEOTIDE SEQUENCE [MRNA]</scope>
    <scope>PROTEIN SEQUENCE OF 16-26</scope>
    <scope>FUNCTION</scope>
    <source>
        <tissue>Hemolymph</tissue>
    </source>
</reference>
<accession>Q5VJG2</accession>